<name>ZIG8_CAEEL</name>
<proteinExistence type="evidence at protein level"/>
<gene>
    <name evidence="10" type="primary">zig-8</name>
    <name evidence="10" type="ORF">Y39E4B.8</name>
</gene>
<accession>G5ED00</accession>
<protein>
    <recommendedName>
        <fullName evidence="6">Zwei Ig domain protein zig-8</fullName>
    </recommendedName>
    <alternativeName>
        <fullName evidence="6">2 Ig domain protein zig-8</fullName>
    </alternativeName>
</protein>
<comment type="function">
    <text evidence="5">Together with zig-5, required postembryonically to maintain the position of ASI and ASH head neuron cell bodies and ventral nerve cord axons of PVQ, PVP and HSN neurons by preventing their displacement that could occur during body growth and movement. May act by reducing L1CAM-like protein sax-7 (long isoform) adhesion.</text>
</comment>
<comment type="subcellular location">
    <subcellularLocation>
        <location evidence="1">Secreted</location>
    </subcellularLocation>
</comment>
<comment type="tissue specificity">
    <text evidence="4">Expressed in PVT neurons and pharyngeal muscles.</text>
</comment>
<comment type="developmental stage">
    <text evidence="4">Expression begins at the late L1 larval stage.</text>
</comment>
<comment type="disruption phenotype">
    <text evidence="5">No visible phenotype. In a zig-5 mutant background, 74 percent of animals have cell bodies of ASI and ASH head neurons displaced either on the top of or anterior to the nerve ring. In addition, double mutants show defects in the positioning of the ventral nerve cord (VNC) axons characterized by axons of embryonically generated PVQ, PVP and HSN neurons from the left and right VNC drifting into the opposite cord (axon flip-over). Both defects begin at the L3 larval stage and become more pronounced at the L4 larval and adult stages. Cell body and axon positioning is normal in embryos and in L1 larvae. In a zig-1, zig-2, zig-3 or zig-4 mutant background, cell body positioning of ASI and ASH head neurons is normal. In unc-13 or unc-54 mutant background, where locomotion is impaired, cell body positioning of ASI and ASH neurons is normal. In a sax-7 (nj53) mutant background, cell body and axon positioning is normal. Simultaneous RNAi-mediated knockdown of zig-5 and zig-8 at the embryonic, larval or adult stage causes a displacement of ASI and ASH head neurons in 6 to 9 percent of animals.</text>
</comment>
<dbReference type="EMBL" id="AF456253">
    <property type="protein sequence ID" value="AAL59611.1"/>
    <property type="molecule type" value="mRNA"/>
</dbReference>
<dbReference type="EMBL" id="BX284603">
    <property type="protein sequence ID" value="CAB54429.2"/>
    <property type="molecule type" value="Genomic_DNA"/>
</dbReference>
<dbReference type="RefSeq" id="NP_499714.1">
    <property type="nucleotide sequence ID" value="NM_067313.7"/>
</dbReference>
<dbReference type="PDB" id="6ON9">
    <property type="method" value="X-ray"/>
    <property type="resolution" value="2.00 A"/>
    <property type="chains" value="A=22-137"/>
</dbReference>
<dbReference type="PDB" id="6ONB">
    <property type="method" value="X-ray"/>
    <property type="resolution" value="1.70 A"/>
    <property type="chains" value="A/C=22-137"/>
</dbReference>
<dbReference type="PDB" id="6PLL">
    <property type="method" value="X-ray"/>
    <property type="resolution" value="2.69 A"/>
    <property type="chains" value="A/B/C=22-137"/>
</dbReference>
<dbReference type="PDBsum" id="6ON9"/>
<dbReference type="PDBsum" id="6ONB"/>
<dbReference type="PDBsum" id="6PLL"/>
<dbReference type="SMR" id="G5ED00"/>
<dbReference type="FunCoup" id="G5ED00">
    <property type="interactions" value="19"/>
</dbReference>
<dbReference type="IntAct" id="G5ED00">
    <property type="interactions" value="1"/>
</dbReference>
<dbReference type="STRING" id="6239.Y39E4B.8.1"/>
<dbReference type="GlyCosmos" id="G5ED00">
    <property type="glycosylation" value="4 sites, No reported glycans"/>
</dbReference>
<dbReference type="PaxDb" id="6239-Y39E4B.8"/>
<dbReference type="PeptideAtlas" id="G5ED00"/>
<dbReference type="EnsemblMetazoa" id="Y39E4B.8.1">
    <property type="protein sequence ID" value="Y39E4B.8.1"/>
    <property type="gene ID" value="WBGene00006985"/>
</dbReference>
<dbReference type="GeneID" id="176732"/>
<dbReference type="KEGG" id="cel:CELE_Y39E4B.8"/>
<dbReference type="AGR" id="WB:WBGene00006985"/>
<dbReference type="CTD" id="176732"/>
<dbReference type="WormBase" id="Y39E4B.8">
    <property type="protein sequence ID" value="CE24241"/>
    <property type="gene ID" value="WBGene00006985"/>
    <property type="gene designation" value="zig-8"/>
</dbReference>
<dbReference type="eggNOG" id="KOG3510">
    <property type="taxonomic scope" value="Eukaryota"/>
</dbReference>
<dbReference type="GeneTree" id="ENSGT00940000175227"/>
<dbReference type="HOGENOM" id="CLU_1039115_0_0_1"/>
<dbReference type="InParanoid" id="G5ED00"/>
<dbReference type="OMA" id="NEVEWWR"/>
<dbReference type="OrthoDB" id="190835at2759"/>
<dbReference type="PhylomeDB" id="G5ED00"/>
<dbReference type="PRO" id="PR:G5ED00"/>
<dbReference type="Proteomes" id="UP000001940">
    <property type="component" value="Chromosome III"/>
</dbReference>
<dbReference type="Bgee" id="WBGene00006985">
    <property type="expression patterns" value="Expressed in pharyngeal muscle cell (C elegans) and 3 other cell types or tissues"/>
</dbReference>
<dbReference type="GO" id="GO:0005576">
    <property type="term" value="C:extracellular region"/>
    <property type="evidence" value="ECO:0007669"/>
    <property type="project" value="UniProtKB-SubCell"/>
</dbReference>
<dbReference type="GO" id="GO:0032589">
    <property type="term" value="C:neuron projection membrane"/>
    <property type="evidence" value="ECO:0000318"/>
    <property type="project" value="GO_Central"/>
</dbReference>
<dbReference type="GO" id="GO:0050808">
    <property type="term" value="P:synapse organization"/>
    <property type="evidence" value="ECO:0000318"/>
    <property type="project" value="GO_Central"/>
</dbReference>
<dbReference type="FunFam" id="2.60.40.10:FF:002539">
    <property type="entry name" value="Zwei Ig domain protein zig-8"/>
    <property type="match status" value="1"/>
</dbReference>
<dbReference type="FunFam" id="2.60.40.10:FF:002637">
    <property type="entry name" value="Zwei Ig domain protein zig-8"/>
    <property type="match status" value="1"/>
</dbReference>
<dbReference type="Gene3D" id="2.60.40.10">
    <property type="entry name" value="Immunoglobulins"/>
    <property type="match status" value="2"/>
</dbReference>
<dbReference type="InterPro" id="IPR007110">
    <property type="entry name" value="Ig-like_dom"/>
</dbReference>
<dbReference type="InterPro" id="IPR036179">
    <property type="entry name" value="Ig-like_dom_sf"/>
</dbReference>
<dbReference type="InterPro" id="IPR013783">
    <property type="entry name" value="Ig-like_fold"/>
</dbReference>
<dbReference type="InterPro" id="IPR003599">
    <property type="entry name" value="Ig_sub"/>
</dbReference>
<dbReference type="InterPro" id="IPR003598">
    <property type="entry name" value="Ig_sub2"/>
</dbReference>
<dbReference type="InterPro" id="IPR013106">
    <property type="entry name" value="Ig_V-set"/>
</dbReference>
<dbReference type="InterPro" id="IPR013151">
    <property type="entry name" value="Immunoglobulin_dom"/>
</dbReference>
<dbReference type="InterPro" id="IPR037448">
    <property type="entry name" value="Zig-8"/>
</dbReference>
<dbReference type="PANTHER" id="PTHR23279:SF36">
    <property type="entry name" value="DEFECTIVE PROBOSCIS EXTENSION RESPONSE 9, ISOFORM A"/>
    <property type="match status" value="1"/>
</dbReference>
<dbReference type="PANTHER" id="PTHR23279">
    <property type="entry name" value="DEFECTIVE PROBOSCIS EXTENSION RESPONSE DPR -RELATED"/>
    <property type="match status" value="1"/>
</dbReference>
<dbReference type="Pfam" id="PF00047">
    <property type="entry name" value="ig"/>
    <property type="match status" value="1"/>
</dbReference>
<dbReference type="Pfam" id="PF07686">
    <property type="entry name" value="V-set"/>
    <property type="match status" value="1"/>
</dbReference>
<dbReference type="SMART" id="SM00409">
    <property type="entry name" value="IG"/>
    <property type="match status" value="2"/>
</dbReference>
<dbReference type="SMART" id="SM00408">
    <property type="entry name" value="IGc2"/>
    <property type="match status" value="2"/>
</dbReference>
<dbReference type="SUPFAM" id="SSF48726">
    <property type="entry name" value="Immunoglobulin"/>
    <property type="match status" value="2"/>
</dbReference>
<dbReference type="PROSITE" id="PS50835">
    <property type="entry name" value="IG_LIKE"/>
    <property type="match status" value="2"/>
</dbReference>
<reference evidence="8" key="1">
    <citation type="journal article" date="2002" name="Science">
        <title>Immunoglobulin-domain proteins required for maintenance of ventral nerve cord organization.</title>
        <authorList>
            <person name="Aurelio O."/>
            <person name="Hall D."/>
            <person name="Hobert O."/>
        </authorList>
    </citation>
    <scope>NUCLEOTIDE SEQUENCE [MRNA]</scope>
    <scope>TISSUE SPECIFICITY</scope>
    <scope>DEVELOPMENTAL STAGE</scope>
</reference>
<reference evidence="9" key="2">
    <citation type="journal article" date="1998" name="Science">
        <title>Genome sequence of the nematode C. elegans: a platform for investigating biology.</title>
        <authorList>
            <consortium name="The C. elegans sequencing consortium"/>
        </authorList>
    </citation>
    <scope>NUCLEOTIDE SEQUENCE [LARGE SCALE GENOMIC DNA]</scope>
    <source>
        <strain evidence="9">Bristol N2</strain>
    </source>
</reference>
<reference evidence="7" key="3">
    <citation type="journal article" date="2012" name="PLoS Genet.">
        <title>The secreted immunoglobulin domain proteins ZIG-5 and ZIG-8 cooperate with L1CAM/SAX-7 to maintain nervous system integrity.</title>
        <authorList>
            <person name="Benard C.Y."/>
            <person name="Blanchette C."/>
            <person name="Recio J."/>
            <person name="Hobert O."/>
        </authorList>
    </citation>
    <scope>FUNCTION</scope>
    <scope>DISRUPTION PHENOTYPE</scope>
</reference>
<sequence>MRRFSNICVILFSFLYATGHGASEEVMACLRQERSRVENPSQTIVNVVAENPAYLHCSVPPDAEHEIAWTRVSDGALLTAGNRTFTRDPRWQVSKKSANIWVLNLRRAEQQDSGCYLCEINDKHNTVYAVYLKVLEPPLPSPSSLQKKSTKLMANMSGDEVVLNCTVTSTDKDEEVLDVVWTRDGNTINFNDTEKYILKVKRDAGVVIETMRIRKATMEDDGNYACEHSQQKASQIVHINKAEAQTSNSATFPCSIFSISIFMYFLYL</sequence>
<keyword id="KW-0002">3D-structure</keyword>
<keyword id="KW-1015">Disulfide bond</keyword>
<keyword id="KW-0325">Glycoprotein</keyword>
<keyword id="KW-0393">Immunoglobulin domain</keyword>
<keyword id="KW-1185">Reference proteome</keyword>
<keyword id="KW-0677">Repeat</keyword>
<keyword id="KW-0964">Secreted</keyword>
<keyword id="KW-0732">Signal</keyword>
<evidence type="ECO:0000255" key="1"/>
<evidence type="ECO:0000255" key="2">
    <source>
        <dbReference type="PROSITE-ProRule" id="PRU00114"/>
    </source>
</evidence>
<evidence type="ECO:0000255" key="3">
    <source>
        <dbReference type="PROSITE-ProRule" id="PRU00498"/>
    </source>
</evidence>
<evidence type="ECO:0000269" key="4">
    <source>
    </source>
</evidence>
<evidence type="ECO:0000269" key="5">
    <source>
    </source>
</evidence>
<evidence type="ECO:0000303" key="6">
    <source>
    </source>
</evidence>
<evidence type="ECO:0000305" key="7"/>
<evidence type="ECO:0000312" key="8">
    <source>
        <dbReference type="EMBL" id="AAL59611.1"/>
    </source>
</evidence>
<evidence type="ECO:0000312" key="9">
    <source>
        <dbReference type="Proteomes" id="UP000001940"/>
    </source>
</evidence>
<evidence type="ECO:0000312" key="10">
    <source>
        <dbReference type="WormBase" id="Y39E4B.8"/>
    </source>
</evidence>
<evidence type="ECO:0007829" key="11">
    <source>
        <dbReference type="PDB" id="6ON9"/>
    </source>
</evidence>
<evidence type="ECO:0007829" key="12">
    <source>
        <dbReference type="PDB" id="6ONB"/>
    </source>
</evidence>
<organism evidence="9">
    <name type="scientific">Caenorhabditis elegans</name>
    <dbReference type="NCBI Taxonomy" id="6239"/>
    <lineage>
        <taxon>Eukaryota</taxon>
        <taxon>Metazoa</taxon>
        <taxon>Ecdysozoa</taxon>
        <taxon>Nematoda</taxon>
        <taxon>Chromadorea</taxon>
        <taxon>Rhabditida</taxon>
        <taxon>Rhabditina</taxon>
        <taxon>Rhabditomorpha</taxon>
        <taxon>Rhabditoidea</taxon>
        <taxon>Rhabditidae</taxon>
        <taxon>Peloderinae</taxon>
        <taxon>Caenorhabditis</taxon>
    </lineage>
</organism>
<feature type="signal peptide" evidence="1">
    <location>
        <begin position="1"/>
        <end position="21"/>
    </location>
</feature>
<feature type="chain" id="PRO_5007661457" description="Zwei Ig domain protein zig-8">
    <location>
        <begin position="22"/>
        <end position="268"/>
    </location>
</feature>
<feature type="domain" description="Ig-like C2-type 1" evidence="2">
    <location>
        <begin position="40"/>
        <end position="128"/>
    </location>
</feature>
<feature type="domain" description="Ig-like C2-type 2" evidence="2">
    <location>
        <begin position="140"/>
        <end position="251"/>
    </location>
</feature>
<feature type="glycosylation site" description="N-linked (GlcNAc...) asparagine" evidence="3">
    <location>
        <position position="82"/>
    </location>
</feature>
<feature type="glycosylation site" description="N-linked (GlcNAc...) asparagine" evidence="3">
    <location>
        <position position="155"/>
    </location>
</feature>
<feature type="glycosylation site" description="N-linked (GlcNAc...) asparagine" evidence="3">
    <location>
        <position position="164"/>
    </location>
</feature>
<feature type="glycosylation site" description="N-linked (GlcNAc...) asparagine" evidence="3">
    <location>
        <position position="191"/>
    </location>
</feature>
<feature type="disulfide bond" evidence="2">
    <location>
        <begin position="57"/>
        <end position="118"/>
    </location>
</feature>
<feature type="disulfide bond" evidence="2">
    <location>
        <begin position="165"/>
        <end position="226"/>
    </location>
</feature>
<feature type="helix" evidence="12">
    <location>
        <begin position="23"/>
        <end position="30"/>
    </location>
</feature>
<feature type="strand" evidence="12">
    <location>
        <begin position="44"/>
        <end position="48"/>
    </location>
</feature>
<feature type="strand" evidence="12">
    <location>
        <begin position="53"/>
        <end position="58"/>
    </location>
</feature>
<feature type="strand" evidence="11">
    <location>
        <begin position="61"/>
        <end position="63"/>
    </location>
</feature>
<feature type="strand" evidence="12">
    <location>
        <begin position="67"/>
        <end position="71"/>
    </location>
</feature>
<feature type="turn" evidence="12">
    <location>
        <begin position="72"/>
        <end position="74"/>
    </location>
</feature>
<feature type="strand" evidence="12">
    <location>
        <begin position="77"/>
        <end position="80"/>
    </location>
</feature>
<feature type="strand" evidence="12">
    <location>
        <begin position="91"/>
        <end position="97"/>
    </location>
</feature>
<feature type="strand" evidence="12">
    <location>
        <begin position="100"/>
        <end position="107"/>
    </location>
</feature>
<feature type="helix" evidence="12">
    <location>
        <begin position="110"/>
        <end position="112"/>
    </location>
</feature>
<feature type="strand" evidence="12">
    <location>
        <begin position="114"/>
        <end position="120"/>
    </location>
</feature>
<feature type="strand" evidence="12">
    <location>
        <begin position="127"/>
        <end position="135"/>
    </location>
</feature>